<accession>A8ES35</accession>
<name>MNMA1_ALIB4</name>
<evidence type="ECO:0000255" key="1">
    <source>
        <dbReference type="HAMAP-Rule" id="MF_00144"/>
    </source>
</evidence>
<proteinExistence type="inferred from homology"/>
<comment type="function">
    <text evidence="1">Catalyzes the 2-thiolation of uridine at the wobble position (U34) of tRNA, leading to the formation of s(2)U34.</text>
</comment>
<comment type="catalytic activity">
    <reaction evidence="1">
        <text>S-sulfanyl-L-cysteinyl-[protein] + uridine(34) in tRNA + AH2 + ATP = 2-thiouridine(34) in tRNA + L-cysteinyl-[protein] + A + AMP + diphosphate + H(+)</text>
        <dbReference type="Rhea" id="RHEA:47032"/>
        <dbReference type="Rhea" id="RHEA-COMP:10131"/>
        <dbReference type="Rhea" id="RHEA-COMP:11726"/>
        <dbReference type="Rhea" id="RHEA-COMP:11727"/>
        <dbReference type="Rhea" id="RHEA-COMP:11728"/>
        <dbReference type="ChEBI" id="CHEBI:13193"/>
        <dbReference type="ChEBI" id="CHEBI:15378"/>
        <dbReference type="ChEBI" id="CHEBI:17499"/>
        <dbReference type="ChEBI" id="CHEBI:29950"/>
        <dbReference type="ChEBI" id="CHEBI:30616"/>
        <dbReference type="ChEBI" id="CHEBI:33019"/>
        <dbReference type="ChEBI" id="CHEBI:61963"/>
        <dbReference type="ChEBI" id="CHEBI:65315"/>
        <dbReference type="ChEBI" id="CHEBI:87170"/>
        <dbReference type="ChEBI" id="CHEBI:456215"/>
        <dbReference type="EC" id="2.8.1.13"/>
    </reaction>
</comment>
<comment type="subcellular location">
    <subcellularLocation>
        <location evidence="1">Cytoplasm</location>
    </subcellularLocation>
</comment>
<comment type="similarity">
    <text evidence="1">Belongs to the MnmA/TRMU family.</text>
</comment>
<sequence length="345" mass="39192">MSKKKVMVGMSGGIDSSVTAYMLQNEGYEVEGIYLKLHNRTDGYHEKNLGYIEDVAKFLNIKYYILDLADKFSKEVYDYFVDSYLTGTTPNPCVKCNRQIKFGAMLDFAKQHGASYLATGHYAKTDGKFFYEADDKTKDQSYFLSQVDKDALKYMMFPLSTYKKEDIVKFGAKLDVAYKKITEKSESQEICFVETVYTDVVKKHANIDQEGDVLDENGKVVGKHKGFAHYTIGKRRGFTVKGAQEPHFVTKLNPKDNTIVVGKKEALEVNEVVGNNLNMFIDDTKFSCNVKLRYRSVSTPCEVQIKDEKAYITLKEPVYGVAKGQLAVFYHEEKVIGSAWIESTK</sequence>
<gene>
    <name evidence="1" type="primary">mnmA1</name>
    <name type="ordered locus">Abu_0484</name>
</gene>
<dbReference type="EC" id="2.8.1.13" evidence="1"/>
<dbReference type="EMBL" id="CP000361">
    <property type="protein sequence ID" value="ABV66759.1"/>
    <property type="molecule type" value="Genomic_DNA"/>
</dbReference>
<dbReference type="RefSeq" id="WP_012012296.1">
    <property type="nucleotide sequence ID" value="NC_009850.1"/>
</dbReference>
<dbReference type="SMR" id="A8ES35"/>
<dbReference type="STRING" id="367737.Abu_0484"/>
<dbReference type="GeneID" id="24303927"/>
<dbReference type="KEGG" id="abu:Abu_0484"/>
<dbReference type="eggNOG" id="COG0482">
    <property type="taxonomic scope" value="Bacteria"/>
</dbReference>
<dbReference type="HOGENOM" id="CLU_035188_0_0_7"/>
<dbReference type="Proteomes" id="UP000001136">
    <property type="component" value="Chromosome"/>
</dbReference>
<dbReference type="GO" id="GO:0005737">
    <property type="term" value="C:cytoplasm"/>
    <property type="evidence" value="ECO:0007669"/>
    <property type="project" value="UniProtKB-SubCell"/>
</dbReference>
<dbReference type="GO" id="GO:0005524">
    <property type="term" value="F:ATP binding"/>
    <property type="evidence" value="ECO:0007669"/>
    <property type="project" value="UniProtKB-KW"/>
</dbReference>
<dbReference type="GO" id="GO:0000049">
    <property type="term" value="F:tRNA binding"/>
    <property type="evidence" value="ECO:0007669"/>
    <property type="project" value="UniProtKB-KW"/>
</dbReference>
<dbReference type="GO" id="GO:0103016">
    <property type="term" value="F:tRNA-uridine 2-sulfurtransferase activity"/>
    <property type="evidence" value="ECO:0007669"/>
    <property type="project" value="UniProtKB-EC"/>
</dbReference>
<dbReference type="GO" id="GO:0002143">
    <property type="term" value="P:tRNA wobble position uridine thiolation"/>
    <property type="evidence" value="ECO:0007669"/>
    <property type="project" value="TreeGrafter"/>
</dbReference>
<dbReference type="CDD" id="cd01998">
    <property type="entry name" value="MnmA_TRMU-like"/>
    <property type="match status" value="1"/>
</dbReference>
<dbReference type="FunFam" id="2.30.30.280:FF:000001">
    <property type="entry name" value="tRNA-specific 2-thiouridylase MnmA"/>
    <property type="match status" value="1"/>
</dbReference>
<dbReference type="Gene3D" id="2.30.30.280">
    <property type="entry name" value="Adenine nucleotide alpha hydrolases-like domains"/>
    <property type="match status" value="1"/>
</dbReference>
<dbReference type="Gene3D" id="3.40.50.620">
    <property type="entry name" value="HUPs"/>
    <property type="match status" value="1"/>
</dbReference>
<dbReference type="Gene3D" id="2.40.30.10">
    <property type="entry name" value="Translation factors"/>
    <property type="match status" value="1"/>
</dbReference>
<dbReference type="HAMAP" id="MF_00144">
    <property type="entry name" value="tRNA_thiouridyl_MnmA"/>
    <property type="match status" value="1"/>
</dbReference>
<dbReference type="InterPro" id="IPR004506">
    <property type="entry name" value="MnmA-like"/>
</dbReference>
<dbReference type="InterPro" id="IPR046885">
    <property type="entry name" value="MnmA-like_C"/>
</dbReference>
<dbReference type="InterPro" id="IPR046884">
    <property type="entry name" value="MnmA-like_central"/>
</dbReference>
<dbReference type="InterPro" id="IPR023382">
    <property type="entry name" value="MnmA-like_central_sf"/>
</dbReference>
<dbReference type="InterPro" id="IPR014729">
    <property type="entry name" value="Rossmann-like_a/b/a_fold"/>
</dbReference>
<dbReference type="NCBIfam" id="NF001138">
    <property type="entry name" value="PRK00143.1"/>
    <property type="match status" value="1"/>
</dbReference>
<dbReference type="NCBIfam" id="TIGR00420">
    <property type="entry name" value="trmU"/>
    <property type="match status" value="1"/>
</dbReference>
<dbReference type="PANTHER" id="PTHR11933:SF5">
    <property type="entry name" value="MITOCHONDRIAL TRNA-SPECIFIC 2-THIOURIDYLASE 1"/>
    <property type="match status" value="1"/>
</dbReference>
<dbReference type="PANTHER" id="PTHR11933">
    <property type="entry name" value="TRNA 5-METHYLAMINOMETHYL-2-THIOURIDYLATE -METHYLTRANSFERASE"/>
    <property type="match status" value="1"/>
</dbReference>
<dbReference type="Pfam" id="PF03054">
    <property type="entry name" value="tRNA_Me_trans"/>
    <property type="match status" value="1"/>
</dbReference>
<dbReference type="Pfam" id="PF20258">
    <property type="entry name" value="tRNA_Me_trans_C"/>
    <property type="match status" value="1"/>
</dbReference>
<dbReference type="Pfam" id="PF20259">
    <property type="entry name" value="tRNA_Me_trans_M"/>
    <property type="match status" value="1"/>
</dbReference>
<dbReference type="SUPFAM" id="SSF52402">
    <property type="entry name" value="Adenine nucleotide alpha hydrolases-like"/>
    <property type="match status" value="1"/>
</dbReference>
<keyword id="KW-0067">ATP-binding</keyword>
<keyword id="KW-0963">Cytoplasm</keyword>
<keyword id="KW-1015">Disulfide bond</keyword>
<keyword id="KW-0547">Nucleotide-binding</keyword>
<keyword id="KW-1185">Reference proteome</keyword>
<keyword id="KW-0694">RNA-binding</keyword>
<keyword id="KW-0808">Transferase</keyword>
<keyword id="KW-0819">tRNA processing</keyword>
<keyword id="KW-0820">tRNA-binding</keyword>
<organism>
    <name type="scientific">Aliarcobacter butzleri (strain RM4018)</name>
    <name type="common">Arcobacter butzleri</name>
    <dbReference type="NCBI Taxonomy" id="367737"/>
    <lineage>
        <taxon>Bacteria</taxon>
        <taxon>Pseudomonadati</taxon>
        <taxon>Campylobacterota</taxon>
        <taxon>Epsilonproteobacteria</taxon>
        <taxon>Campylobacterales</taxon>
        <taxon>Arcobacteraceae</taxon>
        <taxon>Aliarcobacter</taxon>
    </lineage>
</organism>
<protein>
    <recommendedName>
        <fullName evidence="1">tRNA-specific 2-thiouridylase MnmA 1</fullName>
        <ecNumber evidence="1">2.8.1.13</ecNumber>
    </recommendedName>
</protein>
<feature type="chain" id="PRO_0000349514" description="tRNA-specific 2-thiouridylase MnmA 1">
    <location>
        <begin position="1"/>
        <end position="345"/>
    </location>
</feature>
<feature type="region of interest" description="Interaction with tRNA" evidence="1">
    <location>
        <begin position="138"/>
        <end position="140"/>
    </location>
</feature>
<feature type="region of interest" description="Interaction with tRNA" evidence="1">
    <location>
        <begin position="293"/>
        <end position="294"/>
    </location>
</feature>
<feature type="active site" description="Nucleophile" evidence="1">
    <location>
        <position position="96"/>
    </location>
</feature>
<feature type="active site" description="Cysteine persulfide intermediate" evidence="1">
    <location>
        <position position="191"/>
    </location>
</feature>
<feature type="binding site" evidence="1">
    <location>
        <begin position="9"/>
        <end position="16"/>
    </location>
    <ligand>
        <name>ATP</name>
        <dbReference type="ChEBI" id="CHEBI:30616"/>
    </ligand>
</feature>
<feature type="binding site" evidence="1">
    <location>
        <position position="35"/>
    </location>
    <ligand>
        <name>ATP</name>
        <dbReference type="ChEBI" id="CHEBI:30616"/>
    </ligand>
</feature>
<feature type="binding site" evidence="1">
    <location>
        <position position="120"/>
    </location>
    <ligand>
        <name>ATP</name>
        <dbReference type="ChEBI" id="CHEBI:30616"/>
    </ligand>
</feature>
<feature type="site" description="Interaction with tRNA" evidence="1">
    <location>
        <position position="121"/>
    </location>
</feature>
<feature type="site" description="Interaction with tRNA" evidence="1">
    <location>
        <position position="325"/>
    </location>
</feature>
<feature type="disulfide bond" description="Alternate" evidence="1">
    <location>
        <begin position="96"/>
        <end position="191"/>
    </location>
</feature>
<reference key="1">
    <citation type="journal article" date="2007" name="PLoS ONE">
        <title>The complete genome sequence and analysis of the Epsilonproteobacterium Arcobacter butzleri.</title>
        <authorList>
            <person name="Miller W.G."/>
            <person name="Parker C.T."/>
            <person name="Rubenfield M."/>
            <person name="Mendz G.L."/>
            <person name="Woesten M.M.S.M."/>
            <person name="Ussery D.W."/>
            <person name="Stolz J.F."/>
            <person name="Binnewies T.T."/>
            <person name="Hallin P.F."/>
            <person name="Wang G."/>
            <person name="Malek J.A."/>
            <person name="Rogosin A."/>
            <person name="Stanker L.H."/>
            <person name="Mandrell R.E."/>
        </authorList>
    </citation>
    <scope>NUCLEOTIDE SEQUENCE [LARGE SCALE GENOMIC DNA]</scope>
    <source>
        <strain>RM4018</strain>
    </source>
</reference>